<keyword id="KW-0413">Isomerase</keyword>
<keyword id="KW-0585">Phenylalanine catabolism</keyword>
<keyword id="KW-1185">Reference proteome</keyword>
<keyword id="KW-0828">Tyrosine catabolism</keyword>
<gene>
    <name type="primary">maiA</name>
    <name type="ordered locus">PA2007</name>
</gene>
<reference key="1">
    <citation type="journal article" date="2000" name="Nature">
        <title>Complete genome sequence of Pseudomonas aeruginosa PAO1, an opportunistic pathogen.</title>
        <authorList>
            <person name="Stover C.K."/>
            <person name="Pham X.-Q.T."/>
            <person name="Erwin A.L."/>
            <person name="Mizoguchi S.D."/>
            <person name="Warrener P."/>
            <person name="Hickey M.J."/>
            <person name="Brinkman F.S.L."/>
            <person name="Hufnagle W.O."/>
            <person name="Kowalik D.J."/>
            <person name="Lagrou M."/>
            <person name="Garber R.L."/>
            <person name="Goltry L."/>
            <person name="Tolentino E."/>
            <person name="Westbrock-Wadman S."/>
            <person name="Yuan Y."/>
            <person name="Brody L.L."/>
            <person name="Coulter S.N."/>
            <person name="Folger K.R."/>
            <person name="Kas A."/>
            <person name="Larbig K."/>
            <person name="Lim R.M."/>
            <person name="Smith K.A."/>
            <person name="Spencer D.H."/>
            <person name="Wong G.K.-S."/>
            <person name="Wu Z."/>
            <person name="Paulsen I.T."/>
            <person name="Reizer J."/>
            <person name="Saier M.H. Jr."/>
            <person name="Hancock R.E.W."/>
            <person name="Lory S."/>
            <person name="Olson M.V."/>
        </authorList>
    </citation>
    <scope>NUCLEOTIDE SEQUENCE [LARGE SCALE GENOMIC DNA]</scope>
    <source>
        <strain>ATCC 15692 / DSM 22644 / CIP 104116 / JCM 14847 / LMG 12228 / 1C / PRS 101 / PAO1</strain>
    </source>
</reference>
<comment type="catalytic activity">
    <reaction>
        <text>4-maleylacetoacetate = 4-fumarylacetoacetate</text>
        <dbReference type="Rhea" id="RHEA:14817"/>
        <dbReference type="ChEBI" id="CHEBI:17105"/>
        <dbReference type="ChEBI" id="CHEBI:18034"/>
        <dbReference type="EC" id="5.2.1.2"/>
    </reaction>
</comment>
<comment type="pathway">
    <text>Amino-acid degradation; L-phenylalanine degradation; acetoacetate and fumarate from L-phenylalanine: step 5/6.</text>
</comment>
<comment type="similarity">
    <text evidence="1">Belongs to the GST superfamily. Zeta family.</text>
</comment>
<name>MAAI_PSEAE</name>
<organism>
    <name type="scientific">Pseudomonas aeruginosa (strain ATCC 15692 / DSM 22644 / CIP 104116 / JCM 14847 / LMG 12228 / 1C / PRS 101 / PAO1)</name>
    <dbReference type="NCBI Taxonomy" id="208964"/>
    <lineage>
        <taxon>Bacteria</taxon>
        <taxon>Pseudomonadati</taxon>
        <taxon>Pseudomonadota</taxon>
        <taxon>Gammaproteobacteria</taxon>
        <taxon>Pseudomonadales</taxon>
        <taxon>Pseudomonadaceae</taxon>
        <taxon>Pseudomonas</taxon>
    </lineage>
</organism>
<sequence>MKLYTYYRSTSSYRVRIALALKGLDYQSLPVNLIRDGGEHRQPAYLALNPQGRVPALQVDEGELLIQSPAIIEYLEERYPQPALLSSDPLRRARERGVAALVGCDIHPLHNASVLNLLRQWGHDEEQVRQWIGHWVGQGLAAVEQLIGDQGWCFGDRPGLADVYLVPQLYAAERFGVALDAWPRIRRVADLAAAHPAFRQAHPANQPDTPAA</sequence>
<protein>
    <recommendedName>
        <fullName>Maleylacetoacetate isomerase</fullName>
        <shortName>MAAI</shortName>
        <ecNumber>5.2.1.2</ecNumber>
    </recommendedName>
</protein>
<dbReference type="EC" id="5.2.1.2"/>
<dbReference type="EMBL" id="AE004091">
    <property type="protein sequence ID" value="AAG05395.1"/>
    <property type="molecule type" value="Genomic_DNA"/>
</dbReference>
<dbReference type="PIR" id="D83394">
    <property type="entry name" value="D83394"/>
</dbReference>
<dbReference type="RefSeq" id="NP_250697.1">
    <property type="nucleotide sequence ID" value="NC_002516.2"/>
</dbReference>
<dbReference type="RefSeq" id="WP_003113505.1">
    <property type="nucleotide sequence ID" value="NZ_QZGE01000026.1"/>
</dbReference>
<dbReference type="SMR" id="P57109"/>
<dbReference type="STRING" id="208964.PA2007"/>
<dbReference type="PaxDb" id="208964-PA2007"/>
<dbReference type="GeneID" id="879853"/>
<dbReference type="KEGG" id="pae:PA2007"/>
<dbReference type="PATRIC" id="fig|208964.12.peg.2091"/>
<dbReference type="PseudoCAP" id="PA2007"/>
<dbReference type="HOGENOM" id="CLU_011226_20_1_6"/>
<dbReference type="InParanoid" id="P57109"/>
<dbReference type="OrthoDB" id="509852at2"/>
<dbReference type="PhylomeDB" id="P57109"/>
<dbReference type="BioCyc" id="PAER208964:G1FZ6-2045-MONOMER"/>
<dbReference type="UniPathway" id="UPA00139">
    <property type="reaction ID" value="UER00340"/>
</dbReference>
<dbReference type="Proteomes" id="UP000002438">
    <property type="component" value="Chromosome"/>
</dbReference>
<dbReference type="GO" id="GO:0005737">
    <property type="term" value="C:cytoplasm"/>
    <property type="evidence" value="ECO:0007669"/>
    <property type="project" value="InterPro"/>
</dbReference>
<dbReference type="GO" id="GO:0004364">
    <property type="term" value="F:glutathione transferase activity"/>
    <property type="evidence" value="ECO:0000318"/>
    <property type="project" value="GO_Central"/>
</dbReference>
<dbReference type="GO" id="GO:0016034">
    <property type="term" value="F:maleylacetoacetate isomerase activity"/>
    <property type="evidence" value="ECO:0000318"/>
    <property type="project" value="GO_Central"/>
</dbReference>
<dbReference type="GO" id="GO:0006749">
    <property type="term" value="P:glutathione metabolic process"/>
    <property type="evidence" value="ECO:0000318"/>
    <property type="project" value="GO_Central"/>
</dbReference>
<dbReference type="GO" id="GO:0006559">
    <property type="term" value="P:L-phenylalanine catabolic process"/>
    <property type="evidence" value="ECO:0000318"/>
    <property type="project" value="GO_Central"/>
</dbReference>
<dbReference type="GO" id="GO:0006572">
    <property type="term" value="P:tyrosine catabolic process"/>
    <property type="evidence" value="ECO:0007669"/>
    <property type="project" value="UniProtKB-KW"/>
</dbReference>
<dbReference type="CDD" id="cd03191">
    <property type="entry name" value="GST_C_Zeta"/>
    <property type="match status" value="1"/>
</dbReference>
<dbReference type="CDD" id="cd03042">
    <property type="entry name" value="GST_N_Zeta"/>
    <property type="match status" value="1"/>
</dbReference>
<dbReference type="FunFam" id="1.20.1050.10:FF:000010">
    <property type="entry name" value="Maleylacetoacetate isomerase isoform 1"/>
    <property type="match status" value="1"/>
</dbReference>
<dbReference type="Gene3D" id="1.20.1050.10">
    <property type="match status" value="1"/>
</dbReference>
<dbReference type="Gene3D" id="3.40.30.10">
    <property type="entry name" value="Glutaredoxin"/>
    <property type="match status" value="1"/>
</dbReference>
<dbReference type="InterPro" id="IPR010987">
    <property type="entry name" value="Glutathione-S-Trfase_C-like"/>
</dbReference>
<dbReference type="InterPro" id="IPR036282">
    <property type="entry name" value="Glutathione-S-Trfase_C_sf"/>
</dbReference>
<dbReference type="InterPro" id="IPR040079">
    <property type="entry name" value="Glutathione_S-Trfase"/>
</dbReference>
<dbReference type="InterPro" id="IPR004045">
    <property type="entry name" value="Glutathione_S-Trfase_N"/>
</dbReference>
<dbReference type="InterPro" id="IPR005955">
    <property type="entry name" value="GST_Zeta"/>
</dbReference>
<dbReference type="InterPro" id="IPR034330">
    <property type="entry name" value="GST_Zeta_C"/>
</dbReference>
<dbReference type="InterPro" id="IPR034333">
    <property type="entry name" value="GST_Zeta_N"/>
</dbReference>
<dbReference type="InterPro" id="IPR036249">
    <property type="entry name" value="Thioredoxin-like_sf"/>
</dbReference>
<dbReference type="NCBIfam" id="TIGR01262">
    <property type="entry name" value="maiA"/>
    <property type="match status" value="1"/>
</dbReference>
<dbReference type="PANTHER" id="PTHR42673:SF21">
    <property type="entry name" value="GLUTATHIONE S-TRANSFERASE YFCF"/>
    <property type="match status" value="1"/>
</dbReference>
<dbReference type="PANTHER" id="PTHR42673">
    <property type="entry name" value="MALEYLACETOACETATE ISOMERASE"/>
    <property type="match status" value="1"/>
</dbReference>
<dbReference type="Pfam" id="PF13410">
    <property type="entry name" value="GST_C_2"/>
    <property type="match status" value="1"/>
</dbReference>
<dbReference type="Pfam" id="PF13417">
    <property type="entry name" value="GST_N_3"/>
    <property type="match status" value="1"/>
</dbReference>
<dbReference type="SFLD" id="SFLDS00019">
    <property type="entry name" value="Glutathione_Transferase_(cytos"/>
    <property type="match status" value="1"/>
</dbReference>
<dbReference type="SFLD" id="SFLDG00358">
    <property type="entry name" value="Main_(cytGST)"/>
    <property type="match status" value="1"/>
</dbReference>
<dbReference type="SUPFAM" id="SSF47616">
    <property type="entry name" value="GST C-terminal domain-like"/>
    <property type="match status" value="1"/>
</dbReference>
<dbReference type="SUPFAM" id="SSF52833">
    <property type="entry name" value="Thioredoxin-like"/>
    <property type="match status" value="1"/>
</dbReference>
<dbReference type="PROSITE" id="PS50405">
    <property type="entry name" value="GST_CTER"/>
    <property type="match status" value="1"/>
</dbReference>
<dbReference type="PROSITE" id="PS50404">
    <property type="entry name" value="GST_NTER"/>
    <property type="match status" value="1"/>
</dbReference>
<accession>P57109</accession>
<evidence type="ECO:0000305" key="1"/>
<feature type="chain" id="PRO_0000186035" description="Maleylacetoacetate isomerase">
    <location>
        <begin position="1"/>
        <end position="212"/>
    </location>
</feature>
<feature type="domain" description="GST N-terminal">
    <location>
        <begin position="1"/>
        <end position="83"/>
    </location>
</feature>
<feature type="domain" description="GST C-terminal">
    <location>
        <begin position="88"/>
        <end position="211"/>
    </location>
</feature>
<proteinExistence type="inferred from homology"/>